<protein>
    <recommendedName>
        <fullName evidence="2">GTP cyclohydrolase 1</fullName>
        <ecNumber evidence="2">3.5.4.16</ecNumber>
    </recommendedName>
    <alternativeName>
        <fullName evidence="2">GTP cyclohydrolase I</fullName>
        <shortName evidence="2">GTP-CH-I</shortName>
    </alternativeName>
</protein>
<organism>
    <name type="scientific">Hyphomonas neptunium (strain ATCC 15444)</name>
    <dbReference type="NCBI Taxonomy" id="228405"/>
    <lineage>
        <taxon>Bacteria</taxon>
        <taxon>Pseudomonadati</taxon>
        <taxon>Pseudomonadota</taxon>
        <taxon>Alphaproteobacteria</taxon>
        <taxon>Hyphomonadales</taxon>
        <taxon>Hyphomonadaceae</taxon>
        <taxon>Hyphomonas</taxon>
    </lineage>
</organism>
<feature type="chain" id="PRO_1000043701" description="GTP cyclohydrolase 1">
    <location>
        <begin position="1"/>
        <end position="206"/>
    </location>
</feature>
<feature type="region of interest" description="Disordered" evidence="3">
    <location>
        <begin position="1"/>
        <end position="23"/>
    </location>
</feature>
<feature type="compositionally biased region" description="Basic and acidic residues" evidence="3">
    <location>
        <begin position="1"/>
        <end position="17"/>
    </location>
</feature>
<feature type="binding site" evidence="2">
    <location>
        <position position="95"/>
    </location>
    <ligand>
        <name>Zn(2+)</name>
        <dbReference type="ChEBI" id="CHEBI:29105"/>
    </ligand>
</feature>
<feature type="binding site" evidence="2">
    <location>
        <position position="98"/>
    </location>
    <ligand>
        <name>Zn(2+)</name>
        <dbReference type="ChEBI" id="CHEBI:29105"/>
    </ligand>
</feature>
<feature type="binding site" evidence="2">
    <location>
        <position position="166"/>
    </location>
    <ligand>
        <name>Zn(2+)</name>
        <dbReference type="ChEBI" id="CHEBI:29105"/>
    </ligand>
</feature>
<proteinExistence type="inferred from homology"/>
<name>GCH1_HYPNA</name>
<comment type="catalytic activity">
    <reaction evidence="2">
        <text>GTP + H2O = 7,8-dihydroneopterin 3'-triphosphate + formate + H(+)</text>
        <dbReference type="Rhea" id="RHEA:17473"/>
        <dbReference type="ChEBI" id="CHEBI:15377"/>
        <dbReference type="ChEBI" id="CHEBI:15378"/>
        <dbReference type="ChEBI" id="CHEBI:15740"/>
        <dbReference type="ChEBI" id="CHEBI:37565"/>
        <dbReference type="ChEBI" id="CHEBI:58462"/>
        <dbReference type="EC" id="3.5.4.16"/>
    </reaction>
</comment>
<comment type="pathway">
    <text evidence="2">Cofactor biosynthesis; 7,8-dihydroneopterin triphosphate biosynthesis; 7,8-dihydroneopterin triphosphate from GTP: step 1/1.</text>
</comment>
<comment type="subunit">
    <text evidence="1">Toroid-shaped homodecamer, composed of two pentamers of five dimers.</text>
</comment>
<comment type="similarity">
    <text evidence="2">Belongs to the GTP cyclohydrolase I family.</text>
</comment>
<evidence type="ECO:0000250" key="1"/>
<evidence type="ECO:0000255" key="2">
    <source>
        <dbReference type="HAMAP-Rule" id="MF_00223"/>
    </source>
</evidence>
<evidence type="ECO:0000256" key="3">
    <source>
        <dbReference type="SAM" id="MobiDB-lite"/>
    </source>
</evidence>
<accession>Q0BXB5</accession>
<reference key="1">
    <citation type="journal article" date="2006" name="J. Bacteriol.">
        <title>Comparative genomic evidence for a close relationship between the dimorphic prosthecate bacteria Hyphomonas neptunium and Caulobacter crescentus.</title>
        <authorList>
            <person name="Badger J.H."/>
            <person name="Hoover T.R."/>
            <person name="Brun Y.V."/>
            <person name="Weiner R.M."/>
            <person name="Laub M.T."/>
            <person name="Alexandre G."/>
            <person name="Mrazek J."/>
            <person name="Ren Q."/>
            <person name="Paulsen I.T."/>
            <person name="Nelson K.E."/>
            <person name="Khouri H.M."/>
            <person name="Radune D."/>
            <person name="Sosa J."/>
            <person name="Dodson R.J."/>
            <person name="Sullivan S.A."/>
            <person name="Rosovitz M.J."/>
            <person name="Madupu R."/>
            <person name="Brinkac L.M."/>
            <person name="Durkin A.S."/>
            <person name="Daugherty S.C."/>
            <person name="Kothari S.P."/>
            <person name="Giglio M.G."/>
            <person name="Zhou L."/>
            <person name="Haft D.H."/>
            <person name="Selengut J.D."/>
            <person name="Davidsen T.M."/>
            <person name="Yang Q."/>
            <person name="Zafar N."/>
            <person name="Ward N.L."/>
        </authorList>
    </citation>
    <scope>NUCLEOTIDE SEQUENCE [LARGE SCALE GENOMIC DNA]</scope>
    <source>
        <strain>ATCC 15444</strain>
    </source>
</reference>
<sequence>MDAVTPKKDIPRPDSVRRPSQQEAEEAVRTLIAWAGDDPAREGLIDTPKRVVNAYKEWFEGYGEDPVKYLSRTFEDVQGYDDIVMLRNIEVESHCEHHIAPFIGKAFIAYKPSTAVVGISKLARVVEIFAKRLQTQETMTAQICDAITESLAPMGTAVFIEAEHQCMSTRGVHHKHVTTITTQFTGVFKSDADLRNRFLNMCGQTV</sequence>
<dbReference type="EC" id="3.5.4.16" evidence="2"/>
<dbReference type="EMBL" id="CP000158">
    <property type="protein sequence ID" value="ABI76022.1"/>
    <property type="molecule type" value="Genomic_DNA"/>
</dbReference>
<dbReference type="RefSeq" id="WP_011648174.1">
    <property type="nucleotide sequence ID" value="NC_008358.1"/>
</dbReference>
<dbReference type="SMR" id="Q0BXB5"/>
<dbReference type="STRING" id="228405.HNE_3203"/>
<dbReference type="KEGG" id="hne:HNE_3203"/>
<dbReference type="eggNOG" id="COG0302">
    <property type="taxonomic scope" value="Bacteria"/>
</dbReference>
<dbReference type="HOGENOM" id="CLU_049768_3_1_5"/>
<dbReference type="UniPathway" id="UPA00848">
    <property type="reaction ID" value="UER00151"/>
</dbReference>
<dbReference type="Proteomes" id="UP000001959">
    <property type="component" value="Chromosome"/>
</dbReference>
<dbReference type="GO" id="GO:0005737">
    <property type="term" value="C:cytoplasm"/>
    <property type="evidence" value="ECO:0007669"/>
    <property type="project" value="TreeGrafter"/>
</dbReference>
<dbReference type="GO" id="GO:0005525">
    <property type="term" value="F:GTP binding"/>
    <property type="evidence" value="ECO:0007669"/>
    <property type="project" value="UniProtKB-KW"/>
</dbReference>
<dbReference type="GO" id="GO:0003934">
    <property type="term" value="F:GTP cyclohydrolase I activity"/>
    <property type="evidence" value="ECO:0007669"/>
    <property type="project" value="UniProtKB-UniRule"/>
</dbReference>
<dbReference type="GO" id="GO:0008270">
    <property type="term" value="F:zinc ion binding"/>
    <property type="evidence" value="ECO:0007669"/>
    <property type="project" value="UniProtKB-UniRule"/>
</dbReference>
<dbReference type="GO" id="GO:0006730">
    <property type="term" value="P:one-carbon metabolic process"/>
    <property type="evidence" value="ECO:0007669"/>
    <property type="project" value="UniProtKB-UniRule"/>
</dbReference>
<dbReference type="GO" id="GO:0006729">
    <property type="term" value="P:tetrahydrobiopterin biosynthetic process"/>
    <property type="evidence" value="ECO:0007669"/>
    <property type="project" value="TreeGrafter"/>
</dbReference>
<dbReference type="GO" id="GO:0046654">
    <property type="term" value="P:tetrahydrofolate biosynthetic process"/>
    <property type="evidence" value="ECO:0007669"/>
    <property type="project" value="UniProtKB-UniRule"/>
</dbReference>
<dbReference type="FunFam" id="1.10.286.10:FF:000001">
    <property type="entry name" value="GTP cyclohydrolase 1"/>
    <property type="match status" value="1"/>
</dbReference>
<dbReference type="FunFam" id="3.30.1130.10:FF:000001">
    <property type="entry name" value="GTP cyclohydrolase 1"/>
    <property type="match status" value="1"/>
</dbReference>
<dbReference type="Gene3D" id="1.10.286.10">
    <property type="match status" value="1"/>
</dbReference>
<dbReference type="Gene3D" id="3.30.1130.10">
    <property type="match status" value="1"/>
</dbReference>
<dbReference type="HAMAP" id="MF_00223">
    <property type="entry name" value="FolE"/>
    <property type="match status" value="1"/>
</dbReference>
<dbReference type="InterPro" id="IPR043133">
    <property type="entry name" value="GTP-CH-I_C/QueF"/>
</dbReference>
<dbReference type="InterPro" id="IPR043134">
    <property type="entry name" value="GTP-CH-I_N"/>
</dbReference>
<dbReference type="InterPro" id="IPR001474">
    <property type="entry name" value="GTP_CycHdrlase_I"/>
</dbReference>
<dbReference type="InterPro" id="IPR018234">
    <property type="entry name" value="GTP_CycHdrlase_I_CS"/>
</dbReference>
<dbReference type="InterPro" id="IPR020602">
    <property type="entry name" value="GTP_CycHdrlase_I_dom"/>
</dbReference>
<dbReference type="NCBIfam" id="TIGR00063">
    <property type="entry name" value="folE"/>
    <property type="match status" value="1"/>
</dbReference>
<dbReference type="NCBIfam" id="NF006825">
    <property type="entry name" value="PRK09347.1-2"/>
    <property type="match status" value="1"/>
</dbReference>
<dbReference type="NCBIfam" id="NF006826">
    <property type="entry name" value="PRK09347.1-3"/>
    <property type="match status" value="1"/>
</dbReference>
<dbReference type="PANTHER" id="PTHR11109:SF7">
    <property type="entry name" value="GTP CYCLOHYDROLASE 1"/>
    <property type="match status" value="1"/>
</dbReference>
<dbReference type="PANTHER" id="PTHR11109">
    <property type="entry name" value="GTP CYCLOHYDROLASE I"/>
    <property type="match status" value="1"/>
</dbReference>
<dbReference type="Pfam" id="PF01227">
    <property type="entry name" value="GTP_cyclohydroI"/>
    <property type="match status" value="1"/>
</dbReference>
<dbReference type="SUPFAM" id="SSF55620">
    <property type="entry name" value="Tetrahydrobiopterin biosynthesis enzymes-like"/>
    <property type="match status" value="1"/>
</dbReference>
<dbReference type="PROSITE" id="PS00859">
    <property type="entry name" value="GTP_CYCLOHYDROL_1_1"/>
    <property type="match status" value="1"/>
</dbReference>
<keyword id="KW-0342">GTP-binding</keyword>
<keyword id="KW-0378">Hydrolase</keyword>
<keyword id="KW-0479">Metal-binding</keyword>
<keyword id="KW-0547">Nucleotide-binding</keyword>
<keyword id="KW-0554">One-carbon metabolism</keyword>
<keyword id="KW-1185">Reference proteome</keyword>
<keyword id="KW-0862">Zinc</keyword>
<gene>
    <name evidence="2" type="primary">folE</name>
    <name type="ordered locus">HNE_3203</name>
</gene>